<proteinExistence type="evidence at protein level"/>
<sequence length="37" mass="4309">MKVRSSVKKMCDNCKVVRRHGRVLVICSNVKHKQRQG</sequence>
<accession>Q9RSK0</accession>
<dbReference type="EMBL" id="AE000513">
    <property type="protein sequence ID" value="AAF11674.1"/>
    <property type="molecule type" value="Genomic_DNA"/>
</dbReference>
<dbReference type="PIR" id="E75312">
    <property type="entry name" value="E75312"/>
</dbReference>
<dbReference type="RefSeq" id="NP_295847.1">
    <property type="nucleotide sequence ID" value="NC_001263.1"/>
</dbReference>
<dbReference type="RefSeq" id="WP_010888755.1">
    <property type="nucleotide sequence ID" value="NC_001263.1"/>
</dbReference>
<dbReference type="PDB" id="1NKW">
    <property type="method" value="X-ray"/>
    <property type="resolution" value="3.10 A"/>
    <property type="chains" value="4=1-36"/>
</dbReference>
<dbReference type="PDB" id="1NWX">
    <property type="method" value="X-ray"/>
    <property type="resolution" value="3.50 A"/>
    <property type="chains" value="4=1-37"/>
</dbReference>
<dbReference type="PDB" id="1NWY">
    <property type="method" value="X-ray"/>
    <property type="resolution" value="3.30 A"/>
    <property type="chains" value="4=1-37"/>
</dbReference>
<dbReference type="PDB" id="1SM1">
    <property type="method" value="X-ray"/>
    <property type="resolution" value="3.42 A"/>
    <property type="chains" value="4=1-37"/>
</dbReference>
<dbReference type="PDB" id="1XBP">
    <property type="method" value="X-ray"/>
    <property type="resolution" value="3.50 A"/>
    <property type="chains" value="4=1-37"/>
</dbReference>
<dbReference type="PDB" id="2ZJP">
    <property type="method" value="X-ray"/>
    <property type="resolution" value="3.70 A"/>
    <property type="chains" value="4=1-37"/>
</dbReference>
<dbReference type="PDB" id="2ZJQ">
    <property type="method" value="X-ray"/>
    <property type="resolution" value="3.30 A"/>
    <property type="chains" value="4=1-37"/>
</dbReference>
<dbReference type="PDB" id="2ZJR">
    <property type="method" value="X-ray"/>
    <property type="resolution" value="2.91 A"/>
    <property type="chains" value="4=1-37"/>
</dbReference>
<dbReference type="PDB" id="3CF5">
    <property type="method" value="X-ray"/>
    <property type="resolution" value="3.30 A"/>
    <property type="chains" value="4=1-37"/>
</dbReference>
<dbReference type="PDB" id="3DLL">
    <property type="method" value="X-ray"/>
    <property type="resolution" value="3.50 A"/>
    <property type="chains" value="4=1-37"/>
</dbReference>
<dbReference type="PDB" id="3PIO">
    <property type="method" value="X-ray"/>
    <property type="resolution" value="3.25 A"/>
    <property type="chains" value="4=1-37"/>
</dbReference>
<dbReference type="PDB" id="3PIP">
    <property type="method" value="X-ray"/>
    <property type="resolution" value="3.45 A"/>
    <property type="chains" value="4=1-37"/>
</dbReference>
<dbReference type="PDB" id="4IO9">
    <property type="method" value="X-ray"/>
    <property type="resolution" value="3.20 A"/>
    <property type="chains" value="4=1-37"/>
</dbReference>
<dbReference type="PDB" id="4IOA">
    <property type="method" value="X-ray"/>
    <property type="resolution" value="3.20 A"/>
    <property type="chains" value="4=1-37"/>
</dbReference>
<dbReference type="PDB" id="4IOC">
    <property type="method" value="X-ray"/>
    <property type="resolution" value="3.60 A"/>
    <property type="chains" value="4=1-37"/>
</dbReference>
<dbReference type="PDB" id="4V49">
    <property type="method" value="X-ray"/>
    <property type="resolution" value="8.70 A"/>
    <property type="chains" value="4=2-36"/>
</dbReference>
<dbReference type="PDB" id="4V4A">
    <property type="method" value="X-ray"/>
    <property type="resolution" value="9.50 A"/>
    <property type="chains" value="4=2-36"/>
</dbReference>
<dbReference type="PDB" id="4V4G">
    <property type="method" value="X-ray"/>
    <property type="resolution" value="11.50 A"/>
    <property type="chains" value="6=2-36"/>
</dbReference>
<dbReference type="PDB" id="4V4R">
    <property type="method" value="X-ray"/>
    <property type="resolution" value="5.90 A"/>
    <property type="chains" value="B9=1-36"/>
</dbReference>
<dbReference type="PDB" id="4V4S">
    <property type="method" value="X-ray"/>
    <property type="resolution" value="6.76 A"/>
    <property type="chains" value="B9=1-36"/>
</dbReference>
<dbReference type="PDB" id="4V4T">
    <property type="method" value="X-ray"/>
    <property type="resolution" value="6.46 A"/>
    <property type="chains" value="9=1-36"/>
</dbReference>
<dbReference type="PDBsum" id="1NKW"/>
<dbReference type="PDBsum" id="1NWX"/>
<dbReference type="PDBsum" id="1NWY"/>
<dbReference type="PDBsum" id="1SM1"/>
<dbReference type="PDBsum" id="1XBP"/>
<dbReference type="PDBsum" id="2ZJP"/>
<dbReference type="PDBsum" id="2ZJQ"/>
<dbReference type="PDBsum" id="2ZJR"/>
<dbReference type="PDBsum" id="3CF5"/>
<dbReference type="PDBsum" id="3DLL"/>
<dbReference type="PDBsum" id="3PIO"/>
<dbReference type="PDBsum" id="3PIP"/>
<dbReference type="PDBsum" id="4IO9"/>
<dbReference type="PDBsum" id="4IOA"/>
<dbReference type="PDBsum" id="4IOC"/>
<dbReference type="PDBsum" id="4V49"/>
<dbReference type="PDBsum" id="4V4A"/>
<dbReference type="PDBsum" id="4V4G"/>
<dbReference type="PDBsum" id="4V4R"/>
<dbReference type="PDBsum" id="4V4S"/>
<dbReference type="PDBsum" id="4V4T"/>
<dbReference type="SMR" id="Q9RSK0"/>
<dbReference type="FunCoup" id="Q9RSK0">
    <property type="interactions" value="113"/>
</dbReference>
<dbReference type="IntAct" id="Q9RSK0">
    <property type="interactions" value="1"/>
</dbReference>
<dbReference type="STRING" id="243230.DR_2124"/>
<dbReference type="PaxDb" id="243230-DR_2124"/>
<dbReference type="EnsemblBacteria" id="AAF11674">
    <property type="protein sequence ID" value="AAF11674"/>
    <property type="gene ID" value="DR_2124"/>
</dbReference>
<dbReference type="GeneID" id="69518366"/>
<dbReference type="KEGG" id="dra:DR_2124"/>
<dbReference type="PATRIC" id="fig|243230.17.peg.2347"/>
<dbReference type="eggNOG" id="COG0257">
    <property type="taxonomic scope" value="Bacteria"/>
</dbReference>
<dbReference type="HOGENOM" id="CLU_135723_6_2_0"/>
<dbReference type="InParanoid" id="Q9RSK0"/>
<dbReference type="OrthoDB" id="9802520at2"/>
<dbReference type="EvolutionaryTrace" id="Q9RSK0"/>
<dbReference type="Proteomes" id="UP000002524">
    <property type="component" value="Chromosome 1"/>
</dbReference>
<dbReference type="GO" id="GO:0005737">
    <property type="term" value="C:cytoplasm"/>
    <property type="evidence" value="ECO:0007669"/>
    <property type="project" value="UniProtKB-ARBA"/>
</dbReference>
<dbReference type="GO" id="GO:1990904">
    <property type="term" value="C:ribonucleoprotein complex"/>
    <property type="evidence" value="ECO:0007669"/>
    <property type="project" value="UniProtKB-KW"/>
</dbReference>
<dbReference type="GO" id="GO:0005840">
    <property type="term" value="C:ribosome"/>
    <property type="evidence" value="ECO:0007669"/>
    <property type="project" value="UniProtKB-KW"/>
</dbReference>
<dbReference type="GO" id="GO:0046872">
    <property type="term" value="F:metal ion binding"/>
    <property type="evidence" value="ECO:0007669"/>
    <property type="project" value="UniProtKB-KW"/>
</dbReference>
<dbReference type="GO" id="GO:0019843">
    <property type="term" value="F:rRNA binding"/>
    <property type="evidence" value="ECO:0007669"/>
    <property type="project" value="UniProtKB-KW"/>
</dbReference>
<dbReference type="GO" id="GO:0003735">
    <property type="term" value="F:structural constituent of ribosome"/>
    <property type="evidence" value="ECO:0007669"/>
    <property type="project" value="InterPro"/>
</dbReference>
<dbReference type="GO" id="GO:0006412">
    <property type="term" value="P:translation"/>
    <property type="evidence" value="ECO:0007669"/>
    <property type="project" value="UniProtKB-UniRule"/>
</dbReference>
<dbReference type="HAMAP" id="MF_00251">
    <property type="entry name" value="Ribosomal_bL36"/>
    <property type="match status" value="1"/>
</dbReference>
<dbReference type="InterPro" id="IPR000473">
    <property type="entry name" value="Ribosomal_bL36"/>
</dbReference>
<dbReference type="InterPro" id="IPR035977">
    <property type="entry name" value="Ribosomal_bL36_sp"/>
</dbReference>
<dbReference type="NCBIfam" id="TIGR01022">
    <property type="entry name" value="rpmJ_bact"/>
    <property type="match status" value="1"/>
</dbReference>
<dbReference type="PANTHER" id="PTHR42888">
    <property type="entry name" value="50S RIBOSOMAL PROTEIN L36, CHLOROPLASTIC"/>
    <property type="match status" value="1"/>
</dbReference>
<dbReference type="PANTHER" id="PTHR42888:SF1">
    <property type="entry name" value="LARGE RIBOSOMAL SUBUNIT PROTEIN BL36C"/>
    <property type="match status" value="1"/>
</dbReference>
<dbReference type="Pfam" id="PF00444">
    <property type="entry name" value="Ribosomal_L36"/>
    <property type="match status" value="1"/>
</dbReference>
<dbReference type="SUPFAM" id="SSF57840">
    <property type="entry name" value="Ribosomal protein L36"/>
    <property type="match status" value="1"/>
</dbReference>
<dbReference type="PROSITE" id="PS00828">
    <property type="entry name" value="RIBOSOMAL_L36"/>
    <property type="match status" value="1"/>
</dbReference>
<protein>
    <recommendedName>
        <fullName evidence="8">Large ribosomal subunit protein bL36</fullName>
    </recommendedName>
    <alternativeName>
        <fullName>50S ribosomal protein L36</fullName>
    </alternativeName>
</protein>
<comment type="function">
    <text>Binds the 23S rRNA.</text>
</comment>
<comment type="cofactor">
    <cofactor evidence="1 8">
        <name>Zn(2+)</name>
        <dbReference type="ChEBI" id="CHEBI:29105"/>
    </cofactor>
    <text evidence="1 8">Binds 1 zinc ion per subunit.</text>
</comment>
<comment type="subunit">
    <text evidence="2 3 4 5 6 7">Part of the 50S ribosomal subunit.</text>
</comment>
<comment type="similarity">
    <text evidence="8">Belongs to the bacterial ribosomal protein bL36 family.</text>
</comment>
<organism>
    <name type="scientific">Deinococcus radiodurans (strain ATCC 13939 / DSM 20539 / JCM 16871 / CCUG 27074 / LMG 4051 / NBRC 15346 / NCIMB 9279 / VKM B-1422 / R1)</name>
    <dbReference type="NCBI Taxonomy" id="243230"/>
    <lineage>
        <taxon>Bacteria</taxon>
        <taxon>Thermotogati</taxon>
        <taxon>Deinococcota</taxon>
        <taxon>Deinococci</taxon>
        <taxon>Deinococcales</taxon>
        <taxon>Deinococcaceae</taxon>
        <taxon>Deinococcus</taxon>
    </lineage>
</organism>
<name>RL36_DEIRA</name>
<keyword id="KW-0002">3D-structure</keyword>
<keyword id="KW-0903">Direct protein sequencing</keyword>
<keyword id="KW-0479">Metal-binding</keyword>
<keyword id="KW-1185">Reference proteome</keyword>
<keyword id="KW-0687">Ribonucleoprotein</keyword>
<keyword id="KW-0689">Ribosomal protein</keyword>
<keyword id="KW-0694">RNA-binding</keyword>
<keyword id="KW-0699">rRNA-binding</keyword>
<keyword id="KW-0862">Zinc</keyword>
<feature type="chain" id="PRO_0000126180" description="Large ribosomal subunit protein bL36">
    <location>
        <begin position="1"/>
        <end position="37"/>
    </location>
</feature>
<feature type="binding site" evidence="1 8">
    <location>
        <position position="11"/>
    </location>
    <ligand>
        <name>Zn(2+)</name>
        <dbReference type="ChEBI" id="CHEBI:29105"/>
    </ligand>
</feature>
<feature type="binding site" evidence="1 8">
    <location>
        <position position="14"/>
    </location>
    <ligand>
        <name>Zn(2+)</name>
        <dbReference type="ChEBI" id="CHEBI:29105"/>
    </ligand>
</feature>
<feature type="binding site" evidence="1 8">
    <location>
        <position position="27"/>
    </location>
    <ligand>
        <name>Zn(2+)</name>
        <dbReference type="ChEBI" id="CHEBI:29105"/>
    </ligand>
</feature>
<feature type="binding site" evidence="1 8">
    <location>
        <position position="32"/>
    </location>
    <ligand>
        <name>Zn(2+)</name>
        <dbReference type="ChEBI" id="CHEBI:29105"/>
    </ligand>
</feature>
<feature type="strand" evidence="10">
    <location>
        <begin position="11"/>
        <end position="13"/>
    </location>
</feature>
<feature type="strand" evidence="10">
    <location>
        <begin position="15"/>
        <end position="18"/>
    </location>
</feature>
<feature type="strand" evidence="11">
    <location>
        <begin position="20"/>
        <end position="22"/>
    </location>
</feature>
<feature type="strand" evidence="9">
    <location>
        <begin position="23"/>
        <end position="25"/>
    </location>
</feature>
<feature type="strand" evidence="9">
    <location>
        <begin position="28"/>
        <end position="30"/>
    </location>
</feature>
<reference key="1">
    <citation type="journal article" date="1999" name="Science">
        <title>Genome sequence of the radioresistant bacterium Deinococcus radiodurans R1.</title>
        <authorList>
            <person name="White O."/>
            <person name="Eisen J.A."/>
            <person name="Heidelberg J.F."/>
            <person name="Hickey E.K."/>
            <person name="Peterson J.D."/>
            <person name="Dodson R.J."/>
            <person name="Haft D.H."/>
            <person name="Gwinn M.L."/>
            <person name="Nelson W.C."/>
            <person name="Richardson D.L."/>
            <person name="Moffat K.S."/>
            <person name="Qin H."/>
            <person name="Jiang L."/>
            <person name="Pamphile W."/>
            <person name="Crosby M."/>
            <person name="Shen M."/>
            <person name="Vamathevan J.J."/>
            <person name="Lam P."/>
            <person name="McDonald L.A."/>
            <person name="Utterback T.R."/>
            <person name="Zalewski C."/>
            <person name="Makarova K.S."/>
            <person name="Aravind L."/>
            <person name="Daly M.J."/>
            <person name="Minton K.W."/>
            <person name="Fleischmann R.D."/>
            <person name="Ketchum K.A."/>
            <person name="Nelson K.E."/>
            <person name="Salzberg S.L."/>
            <person name="Smith H.O."/>
            <person name="Venter J.C."/>
            <person name="Fraser C.M."/>
        </authorList>
    </citation>
    <scope>NUCLEOTIDE SEQUENCE [LARGE SCALE GENOMIC DNA]</scope>
    <source>
        <strain>ATCC 13939 / DSM 20539 / JCM 16871 / CCUG 27074 / LMG 4051 / NBRC 15346 / NCIMB 9279 / VKM B-1422 / R1</strain>
    </source>
</reference>
<reference key="2">
    <citation type="journal article" date="2001" name="Cell">
        <title>High resolution structure of the large ribosomal subunit from a mesophilic eubacterium.</title>
        <authorList>
            <person name="Harms J."/>
            <person name="Schluenzen F."/>
            <person name="Zarivach R."/>
            <person name="Bashan A."/>
            <person name="Gat S."/>
            <person name="Agmon I."/>
            <person name="Bartels H."/>
            <person name="Franceschi F."/>
            <person name="Yonath A."/>
        </authorList>
    </citation>
    <scope>X-RAY CRYSTALLOGRAPHY (3.1 ANGSTROMS) OF THE 50S SUBUNIT</scope>
    <scope>PROTEIN SEQUENCE OF 1-5</scope>
    <source>
        <strain>ATCC 13939 / DSM 20539 / JCM 16871 / CCUG 27074 / LMG 4051 / NBRC 15346 / NCIMB 9279 / VKM B-1422 / R1</strain>
    </source>
</reference>
<reference key="3">
    <citation type="journal article" date="2001" name="Nature">
        <title>Structural basis for the interaction of antibiotics with the peptidyl transferase centre in eubacteria.</title>
        <authorList>
            <person name="Schluenzen F."/>
            <person name="Zarivach R."/>
            <person name="Harms J."/>
            <person name="Bashan A."/>
            <person name="Tocilj A."/>
            <person name="Albrecht R."/>
            <person name="Yonath A."/>
            <person name="Franceschi F."/>
        </authorList>
    </citation>
    <scope>X-RAY CRYSTALLOGRAPHY (3.1 ANGSTROMS) OF THE 50S SUBUNIT IN COMPLEX WITH FIVE ANTIBIOTICS</scope>
    <source>
        <strain>ATCC 13939 / DSM 20539 / JCM 16871 / CCUG 27074 / LMG 4051 / NBRC 15346 / NCIMB 9279 / VKM B-1422 / R1</strain>
    </source>
</reference>
<reference key="4">
    <citation type="journal article" date="2003" name="Mol. Cell">
        <title>Structural basis of the ribosomal machinery for peptide bond formation, translocation, and nascent chain progression.</title>
        <authorList>
            <person name="Bashan A."/>
            <person name="Agmon I."/>
            <person name="Zarivach R."/>
            <person name="Schluenzen F."/>
            <person name="Harms J."/>
            <person name="Berisio R."/>
            <person name="Bartels H."/>
            <person name="Franceschi F."/>
            <person name="Auerbach T."/>
            <person name="Hansen H.A."/>
            <person name="Kossoy E."/>
            <person name="Kessler M."/>
            <person name="Yonath A."/>
        </authorList>
    </citation>
    <scope>X-RAY CRYSTALLOGRAPHY (3.5 ANGSTROMS) OF THE 50S SUBUNIT IN COMPLEX WITH TRNA MIMICS</scope>
    <source>
        <strain>ATCC 13939 / DSM 20539 / JCM 16871 / CCUG 27074 / LMG 4051 / NBRC 15346 / NCIMB 9279 / VKM B-1422 / R1</strain>
    </source>
</reference>
<reference key="5">
    <citation type="journal article" date="2003" name="Structure">
        <title>Structural basis for the antibiotic activity of ketolides and azalides.</title>
        <authorList>
            <person name="Schluenzen F."/>
            <person name="Harms J.M."/>
            <person name="Franceschi F."/>
            <person name="Hansen H.A."/>
            <person name="Bartels H."/>
            <person name="Zarivach R."/>
            <person name="Yonath A."/>
        </authorList>
    </citation>
    <scope>X-RAY CRYSTALLOGRAPHY (3.3 ANGSTROMS) OF THE 50S SUBUNIT IN COMPLEX WITH MODIFIED MACROLIDE ANTIBIOTICS</scope>
    <source>
        <strain>ATCC 13939 / DSM 20539 / JCM 16871 / CCUG 27074 / LMG 4051 / NBRC 15346 / NCIMB 9279 / VKM B-1422 / R1</strain>
    </source>
</reference>
<reference key="6">
    <citation type="journal article" date="2003" name="Nat. Struct. Biol.">
        <title>Structural insight into the role of the ribosomal tunnel in cellular regulation.</title>
        <authorList>
            <person name="Berisio R."/>
            <person name="Schluenzen F."/>
            <person name="Harms J."/>
            <person name="Bashan A."/>
            <person name="Auerbach T."/>
            <person name="Baram D."/>
            <person name="Yonath A."/>
        </authorList>
    </citation>
    <scope>X-RAY CRYSTALLOGRAPHY (3.4 ANGSTROMS) OF THE 50S SUBUNIT IN COMPLEX WITH TROLEANDOMYCIN</scope>
    <source>
        <strain>ATCC 13939 / DSM 20539 / JCM 16871 / CCUG 27074 / LMG 4051 / NBRC 15346 / NCIMB 9279 / VKM B-1422 / R1</strain>
    </source>
</reference>
<reference key="7">
    <citation type="journal article" date="2004" name="BMC Biol.">
        <title>Alterations at the peptidyl transferase centre of the ribosome induced by the synergistic action of the streptogramins dalfopristin and quinupristin.</title>
        <authorList>
            <person name="Harms J.M."/>
            <person name="Schluenzen F."/>
            <person name="Fucini P."/>
            <person name="Bartels H."/>
            <person name="Yonath A."/>
        </authorList>
    </citation>
    <scope>X-RAY CRYSTALLOGRAPHY (3.4 ANGSTROMS) OF THE 50S SUBUNIT IN COMPLEX WITH THE STREPTOGRAMINS QUINUPRISTIN AND DALFOPRISTIN</scope>
    <source>
        <strain>ATCC 13939 / DSM 20539 / JCM 16871 / CCUG 27074 / LMG 4051 / NBRC 15346 / NCIMB 9279 / VKM B-1422 / R1</strain>
    </source>
</reference>
<reference key="8">
    <citation type="journal article" date="2004" name="Mol. Microbiol.">
        <title>Inhibition of peptide bond formation by pleuromutilins: the structure of the 50S ribosomal subunit from Deinococcus radiodurans in complex with tiamulin.</title>
        <authorList>
            <person name="Schluenzen F."/>
            <person name="Pyetan E."/>
            <person name="Fucini P."/>
            <person name="Yonath A."/>
            <person name="Harms J.M."/>
        </authorList>
    </citation>
    <scope>X-RAY CRYSTALLOGRAPHY (3.5 ANGSTROMS) OF THE 50S SUBUNIT IN COMPLEX WITH TIAMULIN</scope>
    <source>
        <strain>ATCC 13939 / DSM 20539 / JCM 16871 / CCUG 27074 / LMG 4051 / NBRC 15346 / NCIMB 9279 / VKM B-1422 / R1</strain>
    </source>
</reference>
<gene>
    <name type="primary">rpmJ</name>
    <name type="ordered locus">DR_2124</name>
</gene>
<evidence type="ECO:0000250" key="1">
    <source>
        <dbReference type="UniProtKB" id="P80256"/>
    </source>
</evidence>
<evidence type="ECO:0000269" key="2">
    <source>
    </source>
</evidence>
<evidence type="ECO:0000269" key="3">
    <source>
    </source>
</evidence>
<evidence type="ECO:0000269" key="4">
    <source>
    </source>
</evidence>
<evidence type="ECO:0000269" key="5">
    <source>
    </source>
</evidence>
<evidence type="ECO:0000269" key="6">
    <source>
    </source>
</evidence>
<evidence type="ECO:0000269" key="7">
    <source>
    </source>
</evidence>
<evidence type="ECO:0000305" key="8"/>
<evidence type="ECO:0007829" key="9">
    <source>
        <dbReference type="PDB" id="2ZJR"/>
    </source>
</evidence>
<evidence type="ECO:0007829" key="10">
    <source>
        <dbReference type="PDB" id="3PIO"/>
    </source>
</evidence>
<evidence type="ECO:0007829" key="11">
    <source>
        <dbReference type="PDB" id="4IO9"/>
    </source>
</evidence>